<name>NAA60_BOVIN</name>
<keyword id="KW-0007">Acetylation</keyword>
<keyword id="KW-0012">Acyltransferase</keyword>
<keyword id="KW-0156">Chromatin regulator</keyword>
<keyword id="KW-0159">Chromosome partition</keyword>
<keyword id="KW-0333">Golgi apparatus</keyword>
<keyword id="KW-0472">Membrane</keyword>
<keyword id="KW-1185">Reference proteome</keyword>
<keyword id="KW-0808">Transferase</keyword>
<protein>
    <recommendedName>
        <fullName>N-alpha-acetyltransferase 60</fullName>
        <ecNumber evidence="1">2.3.1.259</ecNumber>
    </recommendedName>
    <alternativeName>
        <fullName evidence="1">Histone acetyltransferase type B protein 4</fullName>
        <shortName evidence="1">HAT4</shortName>
        <ecNumber evidence="1">2.3.1.48</ecNumber>
    </alternativeName>
    <alternativeName>
        <fullName>N-acetyltransferase 15</fullName>
    </alternativeName>
    <alternativeName>
        <fullName>N-alpha-acetyltransferase F</fullName>
        <shortName>NatF</shortName>
    </alternativeName>
</protein>
<reference key="1">
    <citation type="submission" date="2006-06" db="EMBL/GenBank/DDBJ databases">
        <authorList>
            <consortium name="NIH - Mammalian Gene Collection (MGC) project"/>
        </authorList>
    </citation>
    <scope>NUCLEOTIDE SEQUENCE [LARGE SCALE MRNA]</scope>
    <source>
        <strain>Hereford</strain>
        <tissue>Basal ganglia</tissue>
    </source>
</reference>
<comment type="function">
    <text evidence="1">N-alpha-acetyltransferase that specifically mediates the acetylation of N-terminal residues of the transmembrane proteins, with a strong preference for N-termini facing the cytosol. Displays N-terminal acetyltransferase activity towards a range of N-terminal sequences including those starting with Met-Lys, Met-Val, Met-Ala and Met-Met. Required for normal chromosomal segregation during anaphase. May also show histone acetyltransferase activity; such results are however unclear in vivo and would require additional experimental evidences.</text>
</comment>
<comment type="catalytic activity">
    <reaction evidence="1">
        <text>N-terminal L-methionyl-[transmembrane protein] + acetyl-CoA = N-terminal N(alpha)-acetyl-L-methionyl-[transmembrane protein] + CoA + H(+)</text>
        <dbReference type="Rhea" id="RHEA:50604"/>
        <dbReference type="Rhea" id="RHEA-COMP:12745"/>
        <dbReference type="Rhea" id="RHEA-COMP:12746"/>
        <dbReference type="ChEBI" id="CHEBI:15378"/>
        <dbReference type="ChEBI" id="CHEBI:57287"/>
        <dbReference type="ChEBI" id="CHEBI:57288"/>
        <dbReference type="ChEBI" id="CHEBI:64731"/>
        <dbReference type="ChEBI" id="CHEBI:133414"/>
        <dbReference type="EC" id="2.3.1.259"/>
    </reaction>
</comment>
<comment type="catalytic activity">
    <reaction evidence="1">
        <text>L-lysyl-[protein] + acetyl-CoA = N(6)-acetyl-L-lysyl-[protein] + CoA + H(+)</text>
        <dbReference type="Rhea" id="RHEA:45948"/>
        <dbReference type="Rhea" id="RHEA-COMP:9752"/>
        <dbReference type="Rhea" id="RHEA-COMP:10731"/>
        <dbReference type="ChEBI" id="CHEBI:15378"/>
        <dbReference type="ChEBI" id="CHEBI:29969"/>
        <dbReference type="ChEBI" id="CHEBI:57287"/>
        <dbReference type="ChEBI" id="CHEBI:57288"/>
        <dbReference type="ChEBI" id="CHEBI:61930"/>
        <dbReference type="EC" id="2.3.1.48"/>
    </reaction>
</comment>
<comment type="subunit">
    <text evidence="1">Monomer and homodimer; monomer in presence of substrate and homodimer in its absence.</text>
</comment>
<comment type="subcellular location">
    <subcellularLocation>
        <location evidence="1">Golgi apparatus membrane</location>
        <topology evidence="1">Peripheral membrane protein</topology>
        <orientation evidence="1">Cytoplasmic side</orientation>
    </subcellularLocation>
    <text evidence="1">Probably forms a intramembrane hairpin-like structure in the membrane.</text>
</comment>
<comment type="PTM">
    <text evidence="1">Acetylated: autoacetylation is required for optimal acetyltransferase activity.</text>
</comment>
<comment type="similarity">
    <text evidence="3">Belongs to the acetyltransferase family. NAA60 subfamily.</text>
</comment>
<gene>
    <name type="primary">NAA60</name>
    <name type="synonym">NAT15</name>
</gene>
<feature type="chain" id="PRO_0000321565" description="N-alpha-acetyltransferase 60">
    <location>
        <begin position="1"/>
        <end position="242"/>
    </location>
</feature>
<feature type="topological domain" description="Cytoplasmic" evidence="1">
    <location>
        <begin position="1"/>
        <end position="192"/>
    </location>
</feature>
<feature type="intramembrane region" description="Helical" evidence="1">
    <location>
        <begin position="193"/>
        <end position="236"/>
    </location>
</feature>
<feature type="topological domain" description="Cytoplasmic" evidence="1">
    <location>
        <begin position="237"/>
        <end position="242"/>
    </location>
</feature>
<feature type="domain" description="N-acetyltransferase" evidence="2">
    <location>
        <begin position="13"/>
        <end position="182"/>
    </location>
</feature>
<feature type="region of interest" description="Required for homodimerization" evidence="1">
    <location>
        <begin position="162"/>
        <end position="173"/>
    </location>
</feature>
<feature type="active site" evidence="1">
    <location>
        <position position="97"/>
    </location>
</feature>
<feature type="active site" evidence="1">
    <location>
        <position position="138"/>
    </location>
</feature>
<feature type="binding site" evidence="1">
    <location>
        <position position="38"/>
    </location>
    <ligand>
        <name>substrate</name>
    </ligand>
</feature>
<feature type="binding site" evidence="1">
    <location>
        <position position="99"/>
    </location>
    <ligand>
        <name>substrate</name>
    </ligand>
</feature>
<feature type="binding site" evidence="1">
    <location>
        <begin position="101"/>
        <end position="103"/>
    </location>
    <ligand>
        <name>acetyl-CoA</name>
        <dbReference type="ChEBI" id="CHEBI:57288"/>
    </ligand>
</feature>
<feature type="binding site" evidence="1">
    <location>
        <begin position="109"/>
        <end position="114"/>
    </location>
    <ligand>
        <name>acetyl-CoA</name>
        <dbReference type="ChEBI" id="CHEBI:57288"/>
    </ligand>
</feature>
<feature type="binding site" evidence="1">
    <location>
        <position position="143"/>
    </location>
    <ligand>
        <name>acetyl-CoA</name>
        <dbReference type="ChEBI" id="CHEBI:57288"/>
    </ligand>
</feature>
<feature type="binding site" evidence="1">
    <location>
        <begin position="150"/>
        <end position="153"/>
    </location>
    <ligand>
        <name>acetyl-CoA</name>
        <dbReference type="ChEBI" id="CHEBI:57288"/>
    </ligand>
</feature>
<feature type="binding site" evidence="1">
    <location>
        <position position="165"/>
    </location>
    <ligand>
        <name>substrate</name>
    </ligand>
</feature>
<feature type="modified residue" description="N6-acetyllysine; by autocatalysis" evidence="1">
    <location>
        <position position="79"/>
    </location>
</feature>
<feature type="modified residue" description="N6-acetyllysine; by autocatalysis" evidence="1">
    <location>
        <position position="105"/>
    </location>
</feature>
<feature type="modified residue" description="N6-acetyllysine; by autocatalysis" evidence="1">
    <location>
        <position position="109"/>
    </location>
</feature>
<feature type="modified residue" description="N6-acetyllysine; by autocatalysis" evidence="1">
    <location>
        <position position="121"/>
    </location>
</feature>
<feature type="modified residue" description="N6-acetyllysine; by autocatalysis" evidence="1">
    <location>
        <position position="156"/>
    </location>
</feature>
<proteinExistence type="evidence at transcript level"/>
<organism>
    <name type="scientific">Bos taurus</name>
    <name type="common">Bovine</name>
    <dbReference type="NCBI Taxonomy" id="9913"/>
    <lineage>
        <taxon>Eukaryota</taxon>
        <taxon>Metazoa</taxon>
        <taxon>Chordata</taxon>
        <taxon>Craniata</taxon>
        <taxon>Vertebrata</taxon>
        <taxon>Euteleostomi</taxon>
        <taxon>Mammalia</taxon>
        <taxon>Eutheria</taxon>
        <taxon>Laurasiatheria</taxon>
        <taxon>Artiodactyla</taxon>
        <taxon>Ruminantia</taxon>
        <taxon>Pecora</taxon>
        <taxon>Bovidae</taxon>
        <taxon>Bovinae</taxon>
        <taxon>Bos</taxon>
    </lineage>
</organism>
<evidence type="ECO:0000250" key="1">
    <source>
        <dbReference type="UniProtKB" id="Q9H7X0"/>
    </source>
</evidence>
<evidence type="ECO:0000255" key="2">
    <source>
        <dbReference type="PROSITE-ProRule" id="PRU00532"/>
    </source>
</evidence>
<evidence type="ECO:0000305" key="3"/>
<accession>Q17QK9</accession>
<sequence length="242" mass="27459">MTEAVPSSALSEVSLRLLCHDDIDTVKHLCGDWFPIEYPDSWYRDITSNKKFFSLAATYRGDIVGMIVAEIKNRTKIHKEDGDILASSFSVDTQVAYILSLGVVKEFRKHGIGSLLLESLKDHISTTAQDHCKAIYLHVLTTNNTAISFYENRDFKQHHYLPYYYSIRGVLKDGFTYVLYINGGHPPWTILDYIQHLGSALANLSPCSIPHRIYRQAQSLLCSFLPWSSISTKGGIEYSRTM</sequence>
<dbReference type="EC" id="2.3.1.259" evidence="1"/>
<dbReference type="EC" id="2.3.1.48" evidence="1"/>
<dbReference type="EMBL" id="BC118298">
    <property type="protein sequence ID" value="AAI18299.1"/>
    <property type="molecule type" value="mRNA"/>
</dbReference>
<dbReference type="RefSeq" id="NP_001069117.1">
    <property type="nucleotide sequence ID" value="NM_001075649.1"/>
</dbReference>
<dbReference type="RefSeq" id="NP_001422360.1">
    <property type="nucleotide sequence ID" value="NM_001435431.1"/>
</dbReference>
<dbReference type="RefSeq" id="XP_005224493.1">
    <property type="nucleotide sequence ID" value="XM_005224436.3"/>
</dbReference>
<dbReference type="SMR" id="Q17QK9"/>
<dbReference type="FunCoup" id="Q17QK9">
    <property type="interactions" value="3088"/>
</dbReference>
<dbReference type="STRING" id="9913.ENSBTAP00000058359"/>
<dbReference type="PaxDb" id="9913-ENSBTAP00000006410"/>
<dbReference type="Ensembl" id="ENSBTAT00000006410.5">
    <property type="protein sequence ID" value="ENSBTAP00000006410.4"/>
    <property type="gene ID" value="ENSBTAG00000004875.6"/>
</dbReference>
<dbReference type="GeneID" id="514154"/>
<dbReference type="KEGG" id="bta:514154"/>
<dbReference type="CTD" id="79903"/>
<dbReference type="VEuPathDB" id="HostDB:ENSBTAG00000004875"/>
<dbReference type="VGNC" id="VGNC:84247">
    <property type="gene designation" value="NAA60"/>
</dbReference>
<dbReference type="eggNOG" id="KOG3138">
    <property type="taxonomic scope" value="Eukaryota"/>
</dbReference>
<dbReference type="GeneTree" id="ENSGT00390000008314"/>
<dbReference type="HOGENOM" id="CLU_013985_5_4_1"/>
<dbReference type="InParanoid" id="Q17QK9"/>
<dbReference type="OMA" id="IHFYKKM"/>
<dbReference type="OrthoDB" id="47017at2759"/>
<dbReference type="TreeFam" id="TF323980"/>
<dbReference type="Proteomes" id="UP000009136">
    <property type="component" value="Chromosome 25"/>
</dbReference>
<dbReference type="Bgee" id="ENSBTAG00000004875">
    <property type="expression patterns" value="Expressed in pigment epithelium of eye and 106 other cell types or tissues"/>
</dbReference>
<dbReference type="GO" id="GO:0000139">
    <property type="term" value="C:Golgi membrane"/>
    <property type="evidence" value="ECO:0000250"/>
    <property type="project" value="UniProtKB"/>
</dbReference>
<dbReference type="GO" id="GO:0004402">
    <property type="term" value="F:histone acetyltransferase activity"/>
    <property type="evidence" value="ECO:0000318"/>
    <property type="project" value="GO_Central"/>
</dbReference>
<dbReference type="GO" id="GO:0010485">
    <property type="term" value="F:histone H4 acetyltransferase activity"/>
    <property type="evidence" value="ECO:0000250"/>
    <property type="project" value="UniProtKB"/>
</dbReference>
<dbReference type="GO" id="GO:0042803">
    <property type="term" value="F:protein homodimerization activity"/>
    <property type="evidence" value="ECO:0000250"/>
    <property type="project" value="UniProtKB"/>
</dbReference>
<dbReference type="GO" id="GO:0120518">
    <property type="term" value="F:protein N-terminal-methionine acetyltransferase activity"/>
    <property type="evidence" value="ECO:0007669"/>
    <property type="project" value="UniProtKB-EC"/>
</dbReference>
<dbReference type="GO" id="GO:0004596">
    <property type="term" value="F:protein-N-terminal amino-acid acetyltransferase activity"/>
    <property type="evidence" value="ECO:0000250"/>
    <property type="project" value="UniProtKB"/>
</dbReference>
<dbReference type="GO" id="GO:0008283">
    <property type="term" value="P:cell population proliferation"/>
    <property type="evidence" value="ECO:0000250"/>
    <property type="project" value="UniProtKB"/>
</dbReference>
<dbReference type="GO" id="GO:0007059">
    <property type="term" value="P:chromosome segregation"/>
    <property type="evidence" value="ECO:0000250"/>
    <property type="project" value="UniProtKB"/>
</dbReference>
<dbReference type="GO" id="GO:0017196">
    <property type="term" value="P:N-terminal peptidyl-methionine acetylation"/>
    <property type="evidence" value="ECO:0000250"/>
    <property type="project" value="UniProtKB"/>
</dbReference>
<dbReference type="GO" id="GO:0006474">
    <property type="term" value="P:N-terminal protein amino acid acetylation"/>
    <property type="evidence" value="ECO:0000250"/>
    <property type="project" value="UniProtKB"/>
</dbReference>
<dbReference type="GO" id="GO:0006334">
    <property type="term" value="P:nucleosome assembly"/>
    <property type="evidence" value="ECO:0000250"/>
    <property type="project" value="UniProtKB"/>
</dbReference>
<dbReference type="CDD" id="cd04301">
    <property type="entry name" value="NAT_SF"/>
    <property type="match status" value="1"/>
</dbReference>
<dbReference type="FunFam" id="3.40.630.30:FF:000028">
    <property type="entry name" value="N-alpha-acetyltransferase 60 isoform X1"/>
    <property type="match status" value="1"/>
</dbReference>
<dbReference type="Gene3D" id="3.40.630.30">
    <property type="match status" value="1"/>
</dbReference>
<dbReference type="InterPro" id="IPR016181">
    <property type="entry name" value="Acyl_CoA_acyltransferase"/>
</dbReference>
<dbReference type="InterPro" id="IPR000182">
    <property type="entry name" value="GNAT_dom"/>
</dbReference>
<dbReference type="InterPro" id="IPR045141">
    <property type="entry name" value="NAA60-like"/>
</dbReference>
<dbReference type="PANTHER" id="PTHR14744">
    <property type="entry name" value="N-ALPHA-ACETYLTRANSFERASE 60"/>
    <property type="match status" value="1"/>
</dbReference>
<dbReference type="PANTHER" id="PTHR14744:SF15">
    <property type="entry name" value="N-ALPHA-ACETYLTRANSFERASE 60"/>
    <property type="match status" value="1"/>
</dbReference>
<dbReference type="Pfam" id="PF00583">
    <property type="entry name" value="Acetyltransf_1"/>
    <property type="match status" value="1"/>
</dbReference>
<dbReference type="SUPFAM" id="SSF55729">
    <property type="entry name" value="Acyl-CoA N-acyltransferases (Nat)"/>
    <property type="match status" value="1"/>
</dbReference>
<dbReference type="PROSITE" id="PS51186">
    <property type="entry name" value="GNAT"/>
    <property type="match status" value="1"/>
</dbReference>